<comment type="function">
    <text evidence="1">Together with its co-chaperonin GroES, plays an essential role in assisting protein folding. The GroEL-GroES system forms a nano-cage that allows encapsulation of the non-native substrate proteins and provides a physical environment optimized to promote and accelerate protein folding.</text>
</comment>
<comment type="catalytic activity">
    <reaction evidence="1">
        <text>ATP + H2O + a folded polypeptide = ADP + phosphate + an unfolded polypeptide.</text>
        <dbReference type="EC" id="5.6.1.7"/>
    </reaction>
</comment>
<comment type="subunit">
    <text evidence="1">Forms a cylinder of 14 subunits composed of two heptameric rings stacked back-to-back. Interacts with the co-chaperonin GroES.</text>
</comment>
<comment type="subcellular location">
    <subcellularLocation>
        <location evidence="1">Cytoplasm</location>
    </subcellularLocation>
</comment>
<comment type="similarity">
    <text evidence="1">Belongs to the chaperonin (HSP60) family.</text>
</comment>
<evidence type="ECO:0000255" key="1">
    <source>
        <dbReference type="HAMAP-Rule" id="MF_00600"/>
    </source>
</evidence>
<name>CH60_OENOB</name>
<feature type="chain" id="PRO_1000025813" description="Chaperonin GroEL">
    <location>
        <begin position="1"/>
        <end position="541"/>
    </location>
</feature>
<feature type="binding site" evidence="1">
    <location>
        <begin position="29"/>
        <end position="32"/>
    </location>
    <ligand>
        <name>ATP</name>
        <dbReference type="ChEBI" id="CHEBI:30616"/>
    </ligand>
</feature>
<feature type="binding site" evidence="1">
    <location>
        <begin position="86"/>
        <end position="90"/>
    </location>
    <ligand>
        <name>ATP</name>
        <dbReference type="ChEBI" id="CHEBI:30616"/>
    </ligand>
</feature>
<feature type="binding site" evidence="1">
    <location>
        <position position="413"/>
    </location>
    <ligand>
        <name>ATP</name>
        <dbReference type="ChEBI" id="CHEBI:30616"/>
    </ligand>
</feature>
<feature type="binding site" evidence="1">
    <location>
        <begin position="478"/>
        <end position="480"/>
    </location>
    <ligand>
        <name>ATP</name>
        <dbReference type="ChEBI" id="CHEBI:30616"/>
    </ligand>
</feature>
<feature type="binding site" evidence="1">
    <location>
        <position position="494"/>
    </location>
    <ligand>
        <name>ATP</name>
        <dbReference type="ChEBI" id="CHEBI:30616"/>
    </ligand>
</feature>
<protein>
    <recommendedName>
        <fullName evidence="1">Chaperonin GroEL</fullName>
        <ecNumber evidence="1">5.6.1.7</ecNumber>
    </recommendedName>
    <alternativeName>
        <fullName evidence="1">60 kDa chaperonin</fullName>
    </alternativeName>
    <alternativeName>
        <fullName evidence="1">Chaperonin-60</fullName>
        <shortName evidence="1">Cpn60</shortName>
    </alternativeName>
</protein>
<accession>Q04E64</accession>
<proteinExistence type="inferred from homology"/>
<gene>
    <name evidence="1" type="primary">groEL</name>
    <name evidence="1" type="synonym">groL</name>
    <name type="ordered locus">OEOE_1396</name>
</gene>
<organism>
    <name type="scientific">Oenococcus oeni (strain ATCC BAA-331 / PSU-1)</name>
    <dbReference type="NCBI Taxonomy" id="203123"/>
    <lineage>
        <taxon>Bacteria</taxon>
        <taxon>Bacillati</taxon>
        <taxon>Bacillota</taxon>
        <taxon>Bacilli</taxon>
        <taxon>Lactobacillales</taxon>
        <taxon>Lactobacillaceae</taxon>
        <taxon>Oenococcus</taxon>
    </lineage>
</organism>
<sequence length="541" mass="57288">MAKEVRFSEDARTRMQAGIDKLADAVKTTIGPKGRNVVLEQSYGTPTITNDGVTIAKAVELDDHYENMGAKLVTEAASKTNDVAGDGTTTATVLTQAIVNEGLKNVTAGANPVGIRSGIEKATAAAVAGLNKNSHEVEDSSSIQQIASISAANEEIGKLIADAMEKVGHDGVITIEESKGIETELDVVEGMQFDRGYMSQYFVTDNDKMETNLDNPYLLITDQKIGNIQDILPVLQSVVEQGRSLLIIADDITGEALPTLVLNKLRGTFNVAAVKAPGFGDRRKAQLQDIAILTGATVVTEDLGLQLKDVTIDQLGQANRVTITKDKTTIVEGKGDKTALADRIKSIRQEIDSTTSDFDREKLQERLAKLAGGVAVVRVGAATETELKEKKYRIEDALNATRAAVEEGFVAGGGTAFVNIIPEVKKVADSLQGDVATGARIVLRALEEPLRQIVENAGLEGSVIAQRAKSEKPEVGFNAATGEWVNMIDAGIVDPTKVTRSALQNAASVSAMILTTEAVVAELPKKDAPAAPNAGGMPGMM</sequence>
<dbReference type="EC" id="5.6.1.7" evidence="1"/>
<dbReference type="EMBL" id="CP000411">
    <property type="protein sequence ID" value="ABJ57258.1"/>
    <property type="molecule type" value="Genomic_DNA"/>
</dbReference>
<dbReference type="RefSeq" id="WP_011677696.1">
    <property type="nucleotide sequence ID" value="NC_008528.1"/>
</dbReference>
<dbReference type="SMR" id="Q04E64"/>
<dbReference type="STRING" id="203123.OEOE_1396"/>
<dbReference type="KEGG" id="ooe:OEOE_1396"/>
<dbReference type="PATRIC" id="fig|203123.7.peg.1411"/>
<dbReference type="eggNOG" id="COG0459">
    <property type="taxonomic scope" value="Bacteria"/>
</dbReference>
<dbReference type="HOGENOM" id="CLU_016503_3_0_9"/>
<dbReference type="Proteomes" id="UP000000774">
    <property type="component" value="Chromosome"/>
</dbReference>
<dbReference type="GO" id="GO:0005737">
    <property type="term" value="C:cytoplasm"/>
    <property type="evidence" value="ECO:0007669"/>
    <property type="project" value="UniProtKB-SubCell"/>
</dbReference>
<dbReference type="GO" id="GO:0005524">
    <property type="term" value="F:ATP binding"/>
    <property type="evidence" value="ECO:0007669"/>
    <property type="project" value="UniProtKB-UniRule"/>
</dbReference>
<dbReference type="GO" id="GO:0140662">
    <property type="term" value="F:ATP-dependent protein folding chaperone"/>
    <property type="evidence" value="ECO:0007669"/>
    <property type="project" value="InterPro"/>
</dbReference>
<dbReference type="GO" id="GO:0016853">
    <property type="term" value="F:isomerase activity"/>
    <property type="evidence" value="ECO:0007669"/>
    <property type="project" value="UniProtKB-KW"/>
</dbReference>
<dbReference type="GO" id="GO:0051082">
    <property type="term" value="F:unfolded protein binding"/>
    <property type="evidence" value="ECO:0007669"/>
    <property type="project" value="UniProtKB-UniRule"/>
</dbReference>
<dbReference type="GO" id="GO:0042026">
    <property type="term" value="P:protein refolding"/>
    <property type="evidence" value="ECO:0007669"/>
    <property type="project" value="UniProtKB-UniRule"/>
</dbReference>
<dbReference type="CDD" id="cd03344">
    <property type="entry name" value="GroEL"/>
    <property type="match status" value="1"/>
</dbReference>
<dbReference type="FunFam" id="3.50.7.10:FF:000001">
    <property type="entry name" value="60 kDa chaperonin"/>
    <property type="match status" value="1"/>
</dbReference>
<dbReference type="Gene3D" id="3.50.7.10">
    <property type="entry name" value="GroEL"/>
    <property type="match status" value="1"/>
</dbReference>
<dbReference type="Gene3D" id="1.10.560.10">
    <property type="entry name" value="GroEL-like equatorial domain"/>
    <property type="match status" value="1"/>
</dbReference>
<dbReference type="Gene3D" id="3.30.260.10">
    <property type="entry name" value="TCP-1-like chaperonin intermediate domain"/>
    <property type="match status" value="1"/>
</dbReference>
<dbReference type="HAMAP" id="MF_00600">
    <property type="entry name" value="CH60"/>
    <property type="match status" value="1"/>
</dbReference>
<dbReference type="InterPro" id="IPR018370">
    <property type="entry name" value="Chaperonin_Cpn60_CS"/>
</dbReference>
<dbReference type="InterPro" id="IPR001844">
    <property type="entry name" value="Cpn60/GroEL"/>
</dbReference>
<dbReference type="InterPro" id="IPR002423">
    <property type="entry name" value="Cpn60/GroEL/TCP-1"/>
</dbReference>
<dbReference type="InterPro" id="IPR027409">
    <property type="entry name" value="GroEL-like_apical_dom_sf"/>
</dbReference>
<dbReference type="InterPro" id="IPR027413">
    <property type="entry name" value="GROEL-like_equatorial_sf"/>
</dbReference>
<dbReference type="InterPro" id="IPR027410">
    <property type="entry name" value="TCP-1-like_intermed_sf"/>
</dbReference>
<dbReference type="NCBIfam" id="TIGR02348">
    <property type="entry name" value="GroEL"/>
    <property type="match status" value="1"/>
</dbReference>
<dbReference type="NCBIfam" id="NF000592">
    <property type="entry name" value="PRK00013.1"/>
    <property type="match status" value="1"/>
</dbReference>
<dbReference type="NCBIfam" id="NF009487">
    <property type="entry name" value="PRK12849.1"/>
    <property type="match status" value="1"/>
</dbReference>
<dbReference type="NCBIfam" id="NF009488">
    <property type="entry name" value="PRK12850.1"/>
    <property type="match status" value="1"/>
</dbReference>
<dbReference type="NCBIfam" id="NF009489">
    <property type="entry name" value="PRK12851.1"/>
    <property type="match status" value="1"/>
</dbReference>
<dbReference type="PANTHER" id="PTHR45633">
    <property type="entry name" value="60 KDA HEAT SHOCK PROTEIN, MITOCHONDRIAL"/>
    <property type="match status" value="1"/>
</dbReference>
<dbReference type="Pfam" id="PF00118">
    <property type="entry name" value="Cpn60_TCP1"/>
    <property type="match status" value="1"/>
</dbReference>
<dbReference type="PRINTS" id="PR00298">
    <property type="entry name" value="CHAPERONIN60"/>
</dbReference>
<dbReference type="SUPFAM" id="SSF52029">
    <property type="entry name" value="GroEL apical domain-like"/>
    <property type="match status" value="1"/>
</dbReference>
<dbReference type="SUPFAM" id="SSF48592">
    <property type="entry name" value="GroEL equatorial domain-like"/>
    <property type="match status" value="2"/>
</dbReference>
<dbReference type="PROSITE" id="PS00296">
    <property type="entry name" value="CHAPERONINS_CPN60"/>
    <property type="match status" value="1"/>
</dbReference>
<reference key="1">
    <citation type="journal article" date="2006" name="Proc. Natl. Acad. Sci. U.S.A.">
        <title>Comparative genomics of the lactic acid bacteria.</title>
        <authorList>
            <person name="Makarova K.S."/>
            <person name="Slesarev A."/>
            <person name="Wolf Y.I."/>
            <person name="Sorokin A."/>
            <person name="Mirkin B."/>
            <person name="Koonin E.V."/>
            <person name="Pavlov A."/>
            <person name="Pavlova N."/>
            <person name="Karamychev V."/>
            <person name="Polouchine N."/>
            <person name="Shakhova V."/>
            <person name="Grigoriev I."/>
            <person name="Lou Y."/>
            <person name="Rohksar D."/>
            <person name="Lucas S."/>
            <person name="Huang K."/>
            <person name="Goodstein D.M."/>
            <person name="Hawkins T."/>
            <person name="Plengvidhya V."/>
            <person name="Welker D."/>
            <person name="Hughes J."/>
            <person name="Goh Y."/>
            <person name="Benson A."/>
            <person name="Baldwin K."/>
            <person name="Lee J.-H."/>
            <person name="Diaz-Muniz I."/>
            <person name="Dosti B."/>
            <person name="Smeianov V."/>
            <person name="Wechter W."/>
            <person name="Barabote R."/>
            <person name="Lorca G."/>
            <person name="Altermann E."/>
            <person name="Barrangou R."/>
            <person name="Ganesan B."/>
            <person name="Xie Y."/>
            <person name="Rawsthorne H."/>
            <person name="Tamir D."/>
            <person name="Parker C."/>
            <person name="Breidt F."/>
            <person name="Broadbent J.R."/>
            <person name="Hutkins R."/>
            <person name="O'Sullivan D."/>
            <person name="Steele J."/>
            <person name="Unlu G."/>
            <person name="Saier M.H. Jr."/>
            <person name="Klaenhammer T."/>
            <person name="Richardson P."/>
            <person name="Kozyavkin S."/>
            <person name="Weimer B.C."/>
            <person name="Mills D.A."/>
        </authorList>
    </citation>
    <scope>NUCLEOTIDE SEQUENCE [LARGE SCALE GENOMIC DNA]</scope>
    <source>
        <strain>ATCC BAA-331 / PSU-1</strain>
    </source>
</reference>
<keyword id="KW-0067">ATP-binding</keyword>
<keyword id="KW-0143">Chaperone</keyword>
<keyword id="KW-0963">Cytoplasm</keyword>
<keyword id="KW-0413">Isomerase</keyword>
<keyword id="KW-0547">Nucleotide-binding</keyword>
<keyword id="KW-1185">Reference proteome</keyword>